<name>ZN541_MOUSE</name>
<feature type="chain" id="PRO_0000361545" description="Zinc finger protein 541">
    <location>
        <begin position="1"/>
        <end position="1363"/>
    </location>
</feature>
<feature type="domain" description="ELM2" evidence="2">
    <location>
        <begin position="1063"/>
        <end position="1155"/>
    </location>
</feature>
<feature type="domain" description="SANT" evidence="3">
    <location>
        <begin position="1170"/>
        <end position="1221"/>
    </location>
</feature>
<feature type="zinc finger region" description="C2H2-type 1" evidence="1">
    <location>
        <begin position="140"/>
        <end position="162"/>
    </location>
</feature>
<feature type="zinc finger region" description="C2H2-type 2" evidence="1">
    <location>
        <begin position="168"/>
        <end position="190"/>
    </location>
</feature>
<feature type="zinc finger region" description="C2H2-type 3" evidence="1">
    <location>
        <begin position="196"/>
        <end position="221"/>
    </location>
</feature>
<feature type="zinc finger region" description="C2H2-type 4" evidence="1">
    <location>
        <begin position="838"/>
        <end position="860"/>
    </location>
</feature>
<feature type="zinc finger region" description="C2H2-type 5" evidence="1">
    <location>
        <begin position="1301"/>
        <end position="1323"/>
    </location>
</feature>
<feature type="region of interest" description="Disordered" evidence="4">
    <location>
        <begin position="1"/>
        <end position="23"/>
    </location>
</feature>
<feature type="region of interest" description="Disordered" evidence="4">
    <location>
        <begin position="106"/>
        <end position="137"/>
    </location>
</feature>
<feature type="region of interest" description="Disordered" evidence="4">
    <location>
        <begin position="232"/>
        <end position="269"/>
    </location>
</feature>
<feature type="region of interest" description="Disordered" evidence="4">
    <location>
        <begin position="286"/>
        <end position="387"/>
    </location>
</feature>
<feature type="region of interest" description="Disordered" evidence="4">
    <location>
        <begin position="440"/>
        <end position="532"/>
    </location>
</feature>
<feature type="region of interest" description="Disordered" evidence="4">
    <location>
        <begin position="574"/>
        <end position="741"/>
    </location>
</feature>
<feature type="region of interest" description="Disordered" evidence="4">
    <location>
        <begin position="935"/>
        <end position="978"/>
    </location>
</feature>
<feature type="region of interest" description="Disordered" evidence="4">
    <location>
        <begin position="1243"/>
        <end position="1298"/>
    </location>
</feature>
<feature type="region of interest" description="Disordered" evidence="4">
    <location>
        <begin position="1343"/>
        <end position="1363"/>
    </location>
</feature>
<feature type="compositionally biased region" description="Polar residues" evidence="4">
    <location>
        <begin position="311"/>
        <end position="321"/>
    </location>
</feature>
<feature type="compositionally biased region" description="Basic and acidic residues" evidence="4">
    <location>
        <begin position="335"/>
        <end position="345"/>
    </location>
</feature>
<feature type="compositionally biased region" description="Low complexity" evidence="4">
    <location>
        <begin position="453"/>
        <end position="465"/>
    </location>
</feature>
<feature type="compositionally biased region" description="Pro residues" evidence="4">
    <location>
        <begin position="597"/>
        <end position="608"/>
    </location>
</feature>
<feature type="compositionally biased region" description="Low complexity" evidence="4">
    <location>
        <begin position="659"/>
        <end position="670"/>
    </location>
</feature>
<feature type="compositionally biased region" description="Basic and acidic residues" evidence="4">
    <location>
        <begin position="937"/>
        <end position="951"/>
    </location>
</feature>
<feature type="compositionally biased region" description="Basic and acidic residues" evidence="4">
    <location>
        <begin position="1244"/>
        <end position="1276"/>
    </location>
</feature>
<feature type="compositionally biased region" description="Acidic residues" evidence="4">
    <location>
        <begin position="1345"/>
        <end position="1355"/>
    </location>
</feature>
<feature type="splice variant" id="VSP_036221" description="In isoform 2." evidence="11">
    <location>
        <begin position="874"/>
        <end position="934"/>
    </location>
</feature>
<feature type="sequence conflict" description="In Ref. 2; AAI57963." evidence="14" ref="2">
    <original>V</original>
    <variation>G</variation>
    <location>
        <position position="26"/>
    </location>
</feature>
<feature type="sequence conflict" description="In Ref. 2; AAI57963." evidence="14" ref="2">
    <original>M</original>
    <variation>T</variation>
    <location>
        <position position="1200"/>
    </location>
</feature>
<sequence>MEPYSLGEEGALPSEGHLPSFSESQVLNCSDTLNRDLGPSTRDLLYAGLSGLDLDPSLSTSDMPSEVLEDNLDTLSLYSGKDSDSVKLLEEYADSESQTSLQDLGLGALKVPKEADEGGRATGSTRKGKRQHSSPQNPLLDCSLCGKVFSSASSLSKHYLTHSQERKHVCKVCSKAFKRQDHLTGHMLTHQKTKPFVCIEQGCSKSYCDYRSLRRHYEVQHGVCILKETPPEEEAYGDPTHNHDVANQPPPSGLRSLGPPEARSPGSVLPNRDLLRCIVSSIVHQKIPSPGPAVGPSDTEARSSACACPTSLGSSSCTPASTPVALGTLGSEIPEETHPPRKEAATEVFTPVQSRAAENGVPDPPESELESESPRLQRPSSLEGWPEGSSLPACLPLFRGHSVPSGSQPSSHNFQWLRNLPGCPKNKGSNVFMVHKPPAVASREGSEGGGSGPSSTPTSVEPSPSLGTTQEELLPFPPALLKAPGEASSEVRQAAGEDETWAPKKCKPDCESFPWQSPTELGLQDAQNPGGLPSDATPLFRQLFMKSQESLVSHEQMQVLQMIAKSQRIFSHTQVATASAQRPGPEGKQSTLKPLQGPWPPQTLPPAPTVDSFQIGPGHSEPEGSPVRRRKTMPAVSRETSPGGPRRDTKGGPKVASAPPSLTGPGLLPSRNPDSSSLAKGTLDLGDIIPNAGSRQSQLGGDEPAGTQLVGKQGQGENGLASGAMRGEKGPACPRGGGYRLFSGHPRAQRFSGFRKEKVKMDVCCAASPSQVAMASFSSAGPLADPPRDMKSKLTIFNRIQGGNIYRLPHPVKEESLAGGCHQPNGGPTDWMESKSTFVCKNCSQMFYTEKGLSSHMCFHSDQWPSPRGKQEQQVKGQMVASVKRKAGREEGAVEDMKRHYDCSSSEPQDVTILSMLVSSGSCGVTPVVLSSLLQGQEKDGEERDSKESCQYRKRKKRPQPKALFAPPAPSALGEPGPGGCHQSCLHSPVFLVDHLLKGLFQCSPYTPPPMLSPIREGSGLYFNTLCSTSRAGPHLISPVLDQVDSSFGICVVKDDTKISIEPHINVGSRFQAEIPELQERLLARVDENVASLVWKPWGDVMTNPETQDRVMELCNVACSSVMPGGGTNLELALHCLHDAQGSVQVALETLLLRGPQKPRTHPLADYRYTGSDIWTPMEKRLFKKAFCAHKKDFYLIHKMIQTKSVAQCVEYYYIWKKMVKFDCGRAPGLEKRGRRELDEVERTEDKVTCSPRERPTHRPTPELKIKTKSYRRESILHSSPSAAPKRTPEPPGSVESQGVFPCRECERVFDKIKSRNAHMKRHRLQEHVEPVRVKWPVKPYPLKEEEEEEEEELGADMGPLQW</sequence>
<reference key="1">
    <citation type="journal article" date="2007" name="BMC Genomics">
        <title>Integrative characterization of germ cell-specific genes from mouse spermatocyte UniGene library.</title>
        <authorList>
            <person name="Choi E."/>
            <person name="Lee J."/>
            <person name="Oh J."/>
            <person name="Park I."/>
            <person name="Han C."/>
            <person name="Yi C."/>
            <person name="Kim D.H."/>
            <person name="Cho B.-N."/>
            <person name="Eddy E.M."/>
            <person name="Cho C."/>
        </authorList>
    </citation>
    <scope>NUCLEOTIDE SEQUENCE [MRNA] (ISOFORM 1)</scope>
    <scope>SUBCELLULAR LOCATION</scope>
    <scope>TISSUE SPECIFICITY</scope>
    <source>
        <strain>ICR</strain>
        <tissue>Testis</tissue>
    </source>
</reference>
<reference key="2">
    <citation type="journal article" date="2004" name="Genome Res.">
        <title>The status, quality, and expansion of the NIH full-length cDNA project: the Mammalian Gene Collection (MGC).</title>
        <authorList>
            <consortium name="The MGC Project Team"/>
        </authorList>
    </citation>
    <scope>NUCLEOTIDE SEQUENCE [LARGE SCALE MRNA] (ISOFORM 2)</scope>
    <source>
        <tissue>Brain</tissue>
    </source>
</reference>
<reference key="3">
    <citation type="journal article" date="2008" name="J. Biol. Chem.">
        <title>A novel germ cell-specific protein, SHIP1, forms a complex with chromatin remodeling activity during spermatogenesis.</title>
        <authorList>
            <person name="Choi E."/>
            <person name="Han C."/>
            <person name="Park I."/>
            <person name="Lee B."/>
            <person name="Jin S."/>
            <person name="Choi H."/>
            <person name="Kim do H."/>
            <person name="Park Z.Y."/>
            <person name="Eddy E.M."/>
            <person name="Cho C."/>
        </authorList>
    </citation>
    <scope>FUNCTION</scope>
    <scope>SUBCELLULAR LOCATION</scope>
    <scope>INTERACTION WITH DNTTIP1</scope>
    <scope>IDENTIFICATION IN A COMPLEX WITH KCTD19; HDAC1 AND HSPA2</scope>
    <scope>TISSUE SPECIFICITY</scope>
</reference>
<reference key="4">
    <citation type="journal article" date="2010" name="Cell">
        <title>A tissue-specific atlas of mouse protein phosphorylation and expression.</title>
        <authorList>
            <person name="Huttlin E.L."/>
            <person name="Jedrychowski M.P."/>
            <person name="Elias J.E."/>
            <person name="Goswami T."/>
            <person name="Rad R."/>
            <person name="Beausoleil S.A."/>
            <person name="Villen J."/>
            <person name="Haas W."/>
            <person name="Sowa M.E."/>
            <person name="Gygi S.P."/>
        </authorList>
    </citation>
    <scope>IDENTIFICATION BY MASS SPECTROMETRY [LARGE SCALE ANALYSIS]</scope>
    <source>
        <tissue>Testis</tissue>
    </source>
</reference>
<reference key="5">
    <citation type="journal article" date="2021" name="Nat. Commun.">
        <title>Meiosis-specific ZFP541 repressor complex promotes developmental progression of meiotic prophase towards completion during mouse spermatogenesis.</title>
        <authorList>
            <person name="Horisawa-Takada Y."/>
            <person name="Kodera C."/>
            <person name="Takemoto K."/>
            <person name="Sakashita A."/>
            <person name="Horisawa K."/>
            <person name="Maeda R."/>
            <person name="Shimada R."/>
            <person name="Usuki S."/>
            <person name="Fujimura S."/>
            <person name="Tani N."/>
            <person name="Matsuura K."/>
            <person name="Akiyama T."/>
            <person name="Suzuki A."/>
            <person name="Niwa H."/>
            <person name="Tachibana M."/>
            <person name="Ohba T."/>
            <person name="Katabuchi H."/>
            <person name="Namekawa S.H."/>
            <person name="Araki K."/>
            <person name="Ishiguro K.I."/>
        </authorList>
    </citation>
    <scope>FUNCTION</scope>
    <scope>SUBCELLULAR LOCATION</scope>
    <scope>DISRUPTION PHENOTYPE</scope>
    <scope>TISSUE SPECIFICITY</scope>
    <scope>IDENTIFICATION IN A COMPLEX WITH HDAC1; HDAC2; DNTTIP1 AND KCTD19</scope>
</reference>
<reference key="6">
    <citation type="journal article" date="2021" name="PLoS Genet.">
        <title>KCTD19 and its associated protein ZFP541 are independently essential for meiosis in male mice.</title>
        <authorList>
            <person name="Oura S."/>
            <person name="Koyano T."/>
            <person name="Kodera C."/>
            <person name="Horisawa-Takada Y."/>
            <person name="Matsuyama M."/>
            <person name="Ishiguro K.I."/>
            <person name="Ikawa M."/>
        </authorList>
    </citation>
    <scope>FUNCTION</scope>
    <scope>DISRUPTION PHENOTYPE</scope>
    <scope>IDENTIFICATION IN A COMPLEX WITH HDAC1 AND KCTD19</scope>
</reference>
<reference key="7">
    <citation type="journal article" date="2022" name="Cell Rep.">
        <title>ZFP541 maintains the repression of pre-pachytene transcriptional programs and promotes male meiosis progression.</title>
        <authorList>
            <person name="Xu J."/>
            <person name="Gao J."/>
            <person name="Liu J."/>
            <person name="Huang X."/>
            <person name="Zhang H."/>
            <person name="Ma A."/>
            <person name="Ye J."/>
            <person name="Zhang X."/>
            <person name="Li Y."/>
            <person name="Yang G."/>
            <person name="Yin H."/>
            <person name="Khan R."/>
            <person name="Li T."/>
            <person name="Fan S."/>
            <person name="Jiang X."/>
            <person name="Zhang Y."/>
            <person name="Jiang H."/>
            <person name="Ma H."/>
            <person name="Shi Q."/>
        </authorList>
    </citation>
    <scope>FUNCTION</scope>
    <scope>DISRUPTION PHENOTYPE</scope>
    <scope>SUBCELLULAR LOCATION</scope>
    <scope>TISSUE SPECIFICITY</scope>
</reference>
<reference key="8">
    <citation type="journal article" date="2022" name="J. Genet. Genomics">
        <title>The ZFP541-KCTD19 complex is essential for pachytene progression by activating meiotic genes during mouse spermatogenesis.</title>
        <authorList>
            <person name="Li Y."/>
            <person name="Meng R."/>
            <person name="Li S."/>
            <person name="Gu B."/>
            <person name="Xu X."/>
            <person name="Zhang H."/>
            <person name="Tan X."/>
            <person name="Shao T."/>
            <person name="Wang J."/>
            <person name="Xu D."/>
            <person name="Wang F."/>
        </authorList>
    </citation>
    <scope>FUNCTION</scope>
    <scope>DISRUPTION PHENOTYPE</scope>
    <scope>SUBCELLULAR LOCATION</scope>
    <scope>TISSUE SPECIFICITY</scope>
    <scope>IDENTIFICATION IN A COMPLEX WITH HDAC1; HDAC2; DNTTIP1 AND KCTD19</scope>
</reference>
<comment type="function">
    <text evidence="6 7 8 9 10">Transcription regulator which is essential for male fertility and for the completion of meiotic prophase in spermatocytes (PubMed:18849567, PubMed:33961623, PubMed:34075040, PubMed:35320728, PubMed:35341968). Regulates progression of the pachytene stage of meiotic prophase by activating the expression of genes involved in meiosis and post-meiosis during spermatogenesis (PubMed:35341968). Maintains the repression of pre-pachytene transcriptional programs, including meiotic double-strand breaks (DSB) formation genes in pachytene spermatocytes and suppresses aberrant DSB formation after mid-pachytene, thus ensuring meiosis progression (PubMed:35320728).</text>
</comment>
<comment type="subunit">
    <text evidence="6 7 10">Interacts with DNTTIP1 (PubMed:18849567). Identified in a complex with KCTD19, HDAC1 and HSPA2 (PubMed:18849567). Identified in a complex with HDAC1, HDAC2, DNTTIP1 and KCTD19 (PubMed:33961623, PubMed:35341968). Identified in a complex with KCTD19 and HDAC1 (PubMed:33961623).</text>
</comment>
<comment type="subcellular location">
    <subcellularLocation>
        <location evidence="2 3 5 6 8 9 10">Nucleus</location>
    </subcellularLocation>
</comment>
<comment type="alternative products">
    <event type="alternative splicing"/>
    <isoform>
        <id>Q0GGX2-1</id>
        <name>1</name>
        <sequence type="displayed"/>
    </isoform>
    <isoform>
        <id>Q0GGX2-2</id>
        <name>2</name>
        <sequence type="described" ref="VSP_036221"/>
    </isoform>
</comment>
<comment type="tissue specificity">
    <text evidence="5 6 8 9 10">Germ-cell-specific. Specifically present in testicular spermatogenic cells, but not in testicular and mature sperm. During spermatogenesis, it is present in spermatocytes and round spermatids only (at protein level).</text>
</comment>
<comment type="disruption phenotype">
    <text evidence="7 8 9 10">Females exhibit normal fertility with no apparent defects in ovaries while males are infertile with a small testis and an absence of spermatids and spermatozoa (PubMed:33961623, PubMed:34075040, PubMed:35320728, PubMed:35341968). Spermatocytes fail to complete meiotic prophase (PubMed:34075040). An aberrant recruitment of DNA double-strand breaks (DSBs) machinery and generation of massive DSBs seen in spermatocytes after mid-pachytene (PubMed:35320728, PubMed:35341968).</text>
</comment>
<protein>
    <recommendedName>
        <fullName>Zinc finger protein 541</fullName>
    </recommendedName>
    <alternativeName>
        <fullName evidence="13">Spermatogenic cell HDAC-interacting protein 1</fullName>
    </alternativeName>
</protein>
<gene>
    <name type="primary">Znf541</name>
    <name evidence="12" type="synonym">Ship1</name>
    <name type="synonym">Zfp541</name>
</gene>
<dbReference type="EMBL" id="DQ864732">
    <property type="protein sequence ID" value="ABI17929.1"/>
    <property type="molecule type" value="mRNA"/>
</dbReference>
<dbReference type="EMBL" id="BC157962">
    <property type="protein sequence ID" value="AAI57963.1"/>
    <property type="molecule type" value="mRNA"/>
</dbReference>
<dbReference type="CCDS" id="CCDS39781.1">
    <molecule id="Q0GGX2-1"/>
</dbReference>
<dbReference type="CCDS" id="CCDS90162.1">
    <molecule id="Q0GGX2-2"/>
</dbReference>
<dbReference type="RefSeq" id="NP_001092747.1">
    <molecule id="Q0GGX2-1"/>
    <property type="nucleotide sequence ID" value="NM_001099277.1"/>
</dbReference>
<dbReference type="RefSeq" id="NP_001334488.1">
    <molecule id="Q0GGX2-2"/>
    <property type="nucleotide sequence ID" value="NM_001347559.1"/>
</dbReference>
<dbReference type="RefSeq" id="XP_006540359.1">
    <molecule id="Q0GGX2-2"/>
    <property type="nucleotide sequence ID" value="XM_006540296.3"/>
</dbReference>
<dbReference type="SMR" id="Q0GGX2"/>
<dbReference type="BioGRID" id="578363">
    <property type="interactions" value="3"/>
</dbReference>
<dbReference type="CORUM" id="Q0GGX2"/>
<dbReference type="FunCoup" id="Q0GGX2">
    <property type="interactions" value="153"/>
</dbReference>
<dbReference type="IntAct" id="Q0GGX2">
    <property type="interactions" value="1"/>
</dbReference>
<dbReference type="MINT" id="Q0GGX2"/>
<dbReference type="STRING" id="10090.ENSMUSP00000147475"/>
<dbReference type="GlyGen" id="Q0GGX2">
    <property type="glycosylation" value="2 sites"/>
</dbReference>
<dbReference type="iPTMnet" id="Q0GGX2"/>
<dbReference type="PhosphoSitePlus" id="Q0GGX2"/>
<dbReference type="SwissPalm" id="Q0GGX2"/>
<dbReference type="PaxDb" id="10090-ENSMUSP00000104149"/>
<dbReference type="ProteomicsDB" id="299586">
    <molecule id="Q0GGX2-1"/>
</dbReference>
<dbReference type="ProteomicsDB" id="299587">
    <molecule id="Q0GGX2-2"/>
</dbReference>
<dbReference type="Antibodypedia" id="18215">
    <property type="antibodies" value="124 antibodies from 26 providers"/>
</dbReference>
<dbReference type="Ensembl" id="ENSMUST00000108509.2">
    <molecule id="Q0GGX2-1"/>
    <property type="protein sequence ID" value="ENSMUSP00000104149.2"/>
    <property type="gene ID" value="ENSMUSG00000078796.5"/>
</dbReference>
<dbReference type="Ensembl" id="ENSMUST00000209369.2">
    <molecule id="Q0GGX2-1"/>
    <property type="protein sequence ID" value="ENSMUSP00000147475.2"/>
    <property type="gene ID" value="ENSMUSG00000078796.5"/>
</dbReference>
<dbReference type="Ensembl" id="ENSMUST00000210805.2">
    <molecule id="Q0GGX2-2"/>
    <property type="protein sequence ID" value="ENSMUSP00000148143.2"/>
    <property type="gene ID" value="ENSMUSG00000078796.5"/>
</dbReference>
<dbReference type="GeneID" id="666528"/>
<dbReference type="KEGG" id="mmu:666528"/>
<dbReference type="UCSC" id="uc009fgv.1">
    <molecule id="Q0GGX2-1"/>
    <property type="organism name" value="mouse"/>
</dbReference>
<dbReference type="UCSC" id="uc012fab.1">
    <molecule id="Q0GGX2-2"/>
    <property type="organism name" value="mouse"/>
</dbReference>
<dbReference type="AGR" id="MGI:3647699"/>
<dbReference type="CTD" id="666528"/>
<dbReference type="MGI" id="MGI:3647699">
    <property type="gene designation" value="Zfp541"/>
</dbReference>
<dbReference type="VEuPathDB" id="HostDB:ENSMUSG00000078796"/>
<dbReference type="eggNOG" id="KOG1721">
    <property type="taxonomic scope" value="Eukaryota"/>
</dbReference>
<dbReference type="eggNOG" id="KOG4167">
    <property type="taxonomic scope" value="Eukaryota"/>
</dbReference>
<dbReference type="GeneTree" id="ENSGT00940000160330"/>
<dbReference type="HOGENOM" id="CLU_006052_0_0_1"/>
<dbReference type="InParanoid" id="Q0GGX2"/>
<dbReference type="OMA" id="FAYDCPD"/>
<dbReference type="OrthoDB" id="10258692at2759"/>
<dbReference type="PhylomeDB" id="Q0GGX2"/>
<dbReference type="TreeFam" id="TF106431"/>
<dbReference type="BioGRID-ORCS" id="666528">
    <property type="hits" value="2 hits in 79 CRISPR screens"/>
</dbReference>
<dbReference type="ChiTaRS" id="Zfp541">
    <property type="organism name" value="mouse"/>
</dbReference>
<dbReference type="PRO" id="PR:Q0GGX2"/>
<dbReference type="Proteomes" id="UP000000589">
    <property type="component" value="Chromosome 7"/>
</dbReference>
<dbReference type="RNAct" id="Q0GGX2">
    <property type="molecule type" value="protein"/>
</dbReference>
<dbReference type="Bgee" id="ENSMUSG00000078796">
    <property type="expression patterns" value="Expressed in seminiferous tubule of testis and 13 other cell types or tissues"/>
</dbReference>
<dbReference type="GO" id="GO:0000118">
    <property type="term" value="C:histone deacetylase complex"/>
    <property type="evidence" value="ECO:0000314"/>
    <property type="project" value="UniProtKB"/>
</dbReference>
<dbReference type="GO" id="GO:0005634">
    <property type="term" value="C:nucleus"/>
    <property type="evidence" value="ECO:0000314"/>
    <property type="project" value="UniProtKB"/>
</dbReference>
<dbReference type="GO" id="GO:0008270">
    <property type="term" value="F:zinc ion binding"/>
    <property type="evidence" value="ECO:0007669"/>
    <property type="project" value="UniProtKB-KW"/>
</dbReference>
<dbReference type="GO" id="GO:0030154">
    <property type="term" value="P:cell differentiation"/>
    <property type="evidence" value="ECO:0007669"/>
    <property type="project" value="UniProtKB-KW"/>
</dbReference>
<dbReference type="GO" id="GO:0007140">
    <property type="term" value="P:male meiotic nuclear division"/>
    <property type="evidence" value="ECO:0000315"/>
    <property type="project" value="UniProtKB"/>
</dbReference>
<dbReference type="GO" id="GO:0045892">
    <property type="term" value="P:negative regulation of DNA-templated transcription"/>
    <property type="evidence" value="ECO:0000315"/>
    <property type="project" value="UniProtKB"/>
</dbReference>
<dbReference type="GO" id="GO:0045893">
    <property type="term" value="P:positive regulation of DNA-templated transcription"/>
    <property type="evidence" value="ECO:0000315"/>
    <property type="project" value="UniProtKB"/>
</dbReference>
<dbReference type="GO" id="GO:0006355">
    <property type="term" value="P:regulation of DNA-templated transcription"/>
    <property type="evidence" value="ECO:0000315"/>
    <property type="project" value="UniProtKB"/>
</dbReference>
<dbReference type="GO" id="GO:0007283">
    <property type="term" value="P:spermatogenesis"/>
    <property type="evidence" value="ECO:0007669"/>
    <property type="project" value="UniProtKB-KW"/>
</dbReference>
<dbReference type="FunFam" id="3.30.160.60:FF:004357">
    <property type="match status" value="1"/>
</dbReference>
<dbReference type="FunFam" id="1.10.10.60:FF:000251">
    <property type="entry name" value="Zinc finger protein 541"/>
    <property type="match status" value="1"/>
</dbReference>
<dbReference type="FunFam" id="3.30.160.60:FF:000656">
    <property type="entry name" value="Zinc finger protein 541"/>
    <property type="match status" value="1"/>
</dbReference>
<dbReference type="Gene3D" id="3.30.160.60">
    <property type="entry name" value="Classic Zinc Finger"/>
    <property type="match status" value="3"/>
</dbReference>
<dbReference type="Gene3D" id="1.10.10.60">
    <property type="entry name" value="Homeodomain-like"/>
    <property type="match status" value="1"/>
</dbReference>
<dbReference type="InterPro" id="IPR000949">
    <property type="entry name" value="ELM2_dom"/>
</dbReference>
<dbReference type="InterPro" id="IPR009057">
    <property type="entry name" value="Homeodomain-like_sf"/>
</dbReference>
<dbReference type="InterPro" id="IPR001005">
    <property type="entry name" value="SANT/Myb"/>
</dbReference>
<dbReference type="InterPro" id="IPR017884">
    <property type="entry name" value="SANT_dom"/>
</dbReference>
<dbReference type="InterPro" id="IPR051066">
    <property type="entry name" value="Trans_reg/Corepressor"/>
</dbReference>
<dbReference type="InterPro" id="IPR036236">
    <property type="entry name" value="Znf_C2H2_sf"/>
</dbReference>
<dbReference type="InterPro" id="IPR013087">
    <property type="entry name" value="Znf_C2H2_type"/>
</dbReference>
<dbReference type="PANTHER" id="PTHR16089">
    <property type="entry name" value="REST COREPRESSOR COREST PROTEIN-RELATED"/>
    <property type="match status" value="1"/>
</dbReference>
<dbReference type="PANTHER" id="PTHR16089:SF23">
    <property type="entry name" value="ZINC FINGER PROTEIN 541"/>
    <property type="match status" value="1"/>
</dbReference>
<dbReference type="Pfam" id="PF01448">
    <property type="entry name" value="ELM2"/>
    <property type="match status" value="1"/>
</dbReference>
<dbReference type="Pfam" id="PF00096">
    <property type="entry name" value="zf-C2H2"/>
    <property type="match status" value="1"/>
</dbReference>
<dbReference type="Pfam" id="PF13912">
    <property type="entry name" value="zf-C2H2_6"/>
    <property type="match status" value="2"/>
</dbReference>
<dbReference type="SMART" id="SM01189">
    <property type="entry name" value="ELM2"/>
    <property type="match status" value="1"/>
</dbReference>
<dbReference type="SMART" id="SM00717">
    <property type="entry name" value="SANT"/>
    <property type="match status" value="1"/>
</dbReference>
<dbReference type="SMART" id="SM00355">
    <property type="entry name" value="ZnF_C2H2"/>
    <property type="match status" value="5"/>
</dbReference>
<dbReference type="SUPFAM" id="SSF57667">
    <property type="entry name" value="beta-beta-alpha zinc fingers"/>
    <property type="match status" value="2"/>
</dbReference>
<dbReference type="SUPFAM" id="SSF46689">
    <property type="entry name" value="Homeodomain-like"/>
    <property type="match status" value="1"/>
</dbReference>
<dbReference type="PROSITE" id="PS51156">
    <property type="entry name" value="ELM2"/>
    <property type="match status" value="1"/>
</dbReference>
<dbReference type="PROSITE" id="PS51293">
    <property type="entry name" value="SANT"/>
    <property type="match status" value="1"/>
</dbReference>
<dbReference type="PROSITE" id="PS00028">
    <property type="entry name" value="ZINC_FINGER_C2H2_1"/>
    <property type="match status" value="5"/>
</dbReference>
<dbReference type="PROSITE" id="PS50157">
    <property type="entry name" value="ZINC_FINGER_C2H2_2"/>
    <property type="match status" value="4"/>
</dbReference>
<keyword id="KW-0010">Activator</keyword>
<keyword id="KW-0025">Alternative splicing</keyword>
<keyword id="KW-0217">Developmental protein</keyword>
<keyword id="KW-0221">Differentiation</keyword>
<keyword id="KW-0469">Meiosis</keyword>
<keyword id="KW-0479">Metal-binding</keyword>
<keyword id="KW-0539">Nucleus</keyword>
<keyword id="KW-1185">Reference proteome</keyword>
<keyword id="KW-0677">Repeat</keyword>
<keyword id="KW-0678">Repressor</keyword>
<keyword id="KW-0744">Spermatogenesis</keyword>
<keyword id="KW-0804">Transcription</keyword>
<keyword id="KW-0805">Transcription regulation</keyword>
<keyword id="KW-0862">Zinc</keyword>
<keyword id="KW-0863">Zinc-finger</keyword>
<evidence type="ECO:0000255" key="1">
    <source>
        <dbReference type="PROSITE-ProRule" id="PRU00042"/>
    </source>
</evidence>
<evidence type="ECO:0000255" key="2">
    <source>
        <dbReference type="PROSITE-ProRule" id="PRU00512"/>
    </source>
</evidence>
<evidence type="ECO:0000255" key="3">
    <source>
        <dbReference type="PROSITE-ProRule" id="PRU00624"/>
    </source>
</evidence>
<evidence type="ECO:0000256" key="4">
    <source>
        <dbReference type="SAM" id="MobiDB-lite"/>
    </source>
</evidence>
<evidence type="ECO:0000269" key="5">
    <source>
    </source>
</evidence>
<evidence type="ECO:0000269" key="6">
    <source>
    </source>
</evidence>
<evidence type="ECO:0000269" key="7">
    <source>
    </source>
</evidence>
<evidence type="ECO:0000269" key="8">
    <source>
    </source>
</evidence>
<evidence type="ECO:0000269" key="9">
    <source>
    </source>
</evidence>
<evidence type="ECO:0000269" key="10">
    <source>
    </source>
</evidence>
<evidence type="ECO:0000303" key="11">
    <source>
    </source>
</evidence>
<evidence type="ECO:0000303" key="12">
    <source>
    </source>
</evidence>
<evidence type="ECO:0000303" key="13">
    <source>
    </source>
</evidence>
<evidence type="ECO:0000305" key="14"/>
<proteinExistence type="evidence at protein level"/>
<accession>Q0GGX2</accession>
<accession>B2RXS6</accession>
<organism>
    <name type="scientific">Mus musculus</name>
    <name type="common">Mouse</name>
    <dbReference type="NCBI Taxonomy" id="10090"/>
    <lineage>
        <taxon>Eukaryota</taxon>
        <taxon>Metazoa</taxon>
        <taxon>Chordata</taxon>
        <taxon>Craniata</taxon>
        <taxon>Vertebrata</taxon>
        <taxon>Euteleostomi</taxon>
        <taxon>Mammalia</taxon>
        <taxon>Eutheria</taxon>
        <taxon>Euarchontoglires</taxon>
        <taxon>Glires</taxon>
        <taxon>Rodentia</taxon>
        <taxon>Myomorpha</taxon>
        <taxon>Muroidea</taxon>
        <taxon>Muridae</taxon>
        <taxon>Murinae</taxon>
        <taxon>Mus</taxon>
        <taxon>Mus</taxon>
    </lineage>
</organism>